<feature type="chain" id="PRO_0000081954" description="Probable splicing factor, arginine/serine-rich 7">
    <location>
        <begin position="1"/>
        <end position="452"/>
    </location>
</feature>
<feature type="domain" description="RRM 1" evidence="4">
    <location>
        <begin position="10"/>
        <end position="91"/>
    </location>
</feature>
<feature type="domain" description="RRM 2" evidence="4">
    <location>
        <begin position="163"/>
        <end position="240"/>
    </location>
</feature>
<feature type="region of interest" description="Disordered" evidence="5">
    <location>
        <begin position="258"/>
        <end position="452"/>
    </location>
</feature>
<feature type="compositionally biased region" description="Basic and acidic residues" evidence="5">
    <location>
        <begin position="259"/>
        <end position="272"/>
    </location>
</feature>
<feature type="compositionally biased region" description="Basic residues" evidence="5">
    <location>
        <begin position="273"/>
        <end position="290"/>
    </location>
</feature>
<feature type="compositionally biased region" description="Basic and acidic residues" evidence="5">
    <location>
        <begin position="291"/>
        <end position="305"/>
    </location>
</feature>
<feature type="compositionally biased region" description="Basic residues" evidence="5">
    <location>
        <begin position="323"/>
        <end position="335"/>
    </location>
</feature>
<feature type="compositionally biased region" description="Basic residues" evidence="5">
    <location>
        <begin position="345"/>
        <end position="360"/>
    </location>
</feature>
<feature type="compositionally biased region" description="Basic residues" evidence="5">
    <location>
        <begin position="370"/>
        <end position="382"/>
    </location>
</feature>
<feature type="compositionally biased region" description="Basic and acidic residues" evidence="5">
    <location>
        <begin position="383"/>
        <end position="421"/>
    </location>
</feature>
<feature type="splice variant" id="VSP_051634" description="In isoform b." evidence="6">
    <original>LITVDPT</original>
    <variation>FYWPLPK</variation>
    <location>
        <begin position="131"/>
        <end position="137"/>
    </location>
</feature>
<feature type="splice variant" id="VSP_051635" description="In isoform b." evidence="6">
    <location>
        <begin position="138"/>
        <end position="452"/>
    </location>
</feature>
<evidence type="ECO:0000250" key="1"/>
<evidence type="ECO:0000250" key="2">
    <source>
        <dbReference type="UniProtKB" id="Q9NEW6"/>
    </source>
</evidence>
<evidence type="ECO:0000255" key="3"/>
<evidence type="ECO:0000255" key="4">
    <source>
        <dbReference type="PROSITE-ProRule" id="PRU00176"/>
    </source>
</evidence>
<evidence type="ECO:0000256" key="5">
    <source>
        <dbReference type="SAM" id="MobiDB-lite"/>
    </source>
</evidence>
<evidence type="ECO:0000303" key="6">
    <source>
    </source>
</evidence>
<evidence type="ECO:0000305" key="7"/>
<evidence type="ECO:0000312" key="8">
    <source>
        <dbReference type="EMBL" id="CAA85414.2"/>
    </source>
</evidence>
<proteinExistence type="inferred from homology"/>
<comment type="subcellular location">
    <subcellularLocation>
        <location evidence="1">Nucleus</location>
    </subcellularLocation>
</comment>
<comment type="alternative products">
    <event type="alternative splicing"/>
    <isoform>
        <id>O01159-1</id>
        <name evidence="6">a</name>
        <sequence type="displayed"/>
    </isoform>
    <isoform>
        <id>O01159-2</id>
        <name evidence="6">b</name>
        <sequence type="described" ref="VSP_051634 VSP_051635"/>
    </isoform>
</comment>
<comment type="PTM">
    <text evidence="2">Extensively phosphorylated on serine residues in the RS domain.</text>
</comment>
<comment type="similarity">
    <text evidence="3">Belongs to the splicing factor SR family.</text>
</comment>
<accession>O01159</accession>
<accession>P90797</accession>
<accession>Q8STE7</accession>
<organism>
    <name type="scientific">Caenorhabditis elegans</name>
    <dbReference type="NCBI Taxonomy" id="6239"/>
    <lineage>
        <taxon>Eukaryota</taxon>
        <taxon>Metazoa</taxon>
        <taxon>Ecdysozoa</taxon>
        <taxon>Nematoda</taxon>
        <taxon>Chromadorea</taxon>
        <taxon>Rhabditida</taxon>
        <taxon>Rhabditina</taxon>
        <taxon>Rhabditomorpha</taxon>
        <taxon>Rhabditoidea</taxon>
        <taxon>Rhabditidae</taxon>
        <taxon>Peloderinae</taxon>
        <taxon>Caenorhabditis</taxon>
    </lineage>
</organism>
<gene>
    <name type="primary">rsp-7</name>
    <name type="ORF">D2089.1</name>
</gene>
<dbReference type="EMBL" id="Z36948">
    <property type="protein sequence ID" value="CAA85414.2"/>
    <property type="molecule type" value="Genomic_DNA"/>
</dbReference>
<dbReference type="EMBL" id="Z49911">
    <property type="protein sequence ID" value="CAA85414.2"/>
    <property type="status" value="JOINED"/>
    <property type="molecule type" value="Genomic_DNA"/>
</dbReference>
<dbReference type="EMBL" id="Z36948">
    <property type="protein sequence ID" value="CAD30436.1"/>
    <property type="molecule type" value="Genomic_DNA"/>
</dbReference>
<dbReference type="EMBL" id="Z49911">
    <property type="protein sequence ID" value="CAD30436.1"/>
    <property type="status" value="JOINED"/>
    <property type="molecule type" value="Genomic_DNA"/>
</dbReference>
<dbReference type="PIR" id="T20382">
    <property type="entry name" value="T20382"/>
</dbReference>
<dbReference type="RefSeq" id="NP_001369854.1">
    <molecule id="O01159-1"/>
    <property type="nucleotide sequence ID" value="NM_001383939.2"/>
</dbReference>
<dbReference type="RefSeq" id="NP_001379303.1">
    <molecule id="O01159-2"/>
    <property type="nucleotide sequence ID" value="NM_001393181.1"/>
</dbReference>
<dbReference type="RefSeq" id="NP_741039.1">
    <property type="nucleotide sequence ID" value="NM_171033.4"/>
</dbReference>
<dbReference type="RefSeq" id="NP_741040.1">
    <property type="nucleotide sequence ID" value="NM_171034.4"/>
</dbReference>
<dbReference type="BioGRID" id="39960">
    <property type="interactions" value="1"/>
</dbReference>
<dbReference type="FunCoup" id="O01159">
    <property type="interactions" value="558"/>
</dbReference>
<dbReference type="STRING" id="6239.D2089.1a.1"/>
<dbReference type="iPTMnet" id="O01159"/>
<dbReference type="PaxDb" id="6239-D2089.1a"/>
<dbReference type="PeptideAtlas" id="O01159"/>
<dbReference type="EnsemblMetazoa" id="D2089.1a.1">
    <molecule id="O01159-1"/>
    <property type="protein sequence ID" value="D2089.1a.1"/>
    <property type="gene ID" value="WBGene00004704"/>
</dbReference>
<dbReference type="EnsemblMetazoa" id="D2089.1b.1">
    <molecule id="O01159-2"/>
    <property type="protein sequence ID" value="D2089.1b.1"/>
    <property type="gene ID" value="WBGene00004704"/>
</dbReference>
<dbReference type="EnsemblMetazoa" id="D2089.1b.2">
    <molecule id="O01159-2"/>
    <property type="protein sequence ID" value="D2089.1b.2"/>
    <property type="gene ID" value="WBGene00004704"/>
</dbReference>
<dbReference type="GeneID" id="174646"/>
<dbReference type="UCSC" id="D2089.1b.1">
    <molecule id="O01159-1"/>
    <property type="organism name" value="c. elegans"/>
</dbReference>
<dbReference type="AGR" id="WB:WBGene00004704"/>
<dbReference type="WormBase" id="D2089.1a">
    <molecule id="O01159-1"/>
    <property type="protein sequence ID" value="CE03111"/>
    <property type="gene ID" value="WBGene00004704"/>
    <property type="gene designation" value="rsp-7"/>
</dbReference>
<dbReference type="WormBase" id="D2089.1b">
    <molecule id="O01159-2"/>
    <property type="protein sequence ID" value="CE30507"/>
    <property type="gene ID" value="WBGene00004704"/>
    <property type="gene designation" value="rsp-7"/>
</dbReference>
<dbReference type="eggNOG" id="KOG4676">
    <property type="taxonomic scope" value="Eukaryota"/>
</dbReference>
<dbReference type="GeneTree" id="ENSGT01030000235193"/>
<dbReference type="HOGENOM" id="CLU_030029_1_0_1"/>
<dbReference type="InParanoid" id="O01159"/>
<dbReference type="OMA" id="SINRRHR"/>
<dbReference type="OrthoDB" id="7763451at2759"/>
<dbReference type="PhylomeDB" id="O01159"/>
<dbReference type="Reactome" id="R-CEL-159236">
    <property type="pathway name" value="Transport of Mature mRNA derived from an Intron-Containing Transcript"/>
</dbReference>
<dbReference type="Reactome" id="R-CEL-72163">
    <property type="pathway name" value="mRNA Splicing - Major Pathway"/>
</dbReference>
<dbReference type="Reactome" id="R-CEL-72187">
    <property type="pathway name" value="mRNA 3'-end processing"/>
</dbReference>
<dbReference type="Reactome" id="R-CEL-72203">
    <property type="pathway name" value="Processing of Capped Intron-Containing Pre-mRNA"/>
</dbReference>
<dbReference type="Reactome" id="R-CEL-73856">
    <property type="pathway name" value="RNA Polymerase II Transcription Termination"/>
</dbReference>
<dbReference type="PRO" id="PR:O01159"/>
<dbReference type="Proteomes" id="UP000001940">
    <property type="component" value="Chromosome II"/>
</dbReference>
<dbReference type="Bgee" id="WBGene00004704">
    <property type="expression patterns" value="Expressed in germ line (C elegans) and 4 other cell types or tissues"/>
</dbReference>
<dbReference type="GO" id="GO:0005654">
    <property type="term" value="C:nucleoplasm"/>
    <property type="evidence" value="ECO:0000318"/>
    <property type="project" value="GO_Central"/>
</dbReference>
<dbReference type="GO" id="GO:0003723">
    <property type="term" value="F:RNA binding"/>
    <property type="evidence" value="ECO:0000318"/>
    <property type="project" value="GO_Central"/>
</dbReference>
<dbReference type="GO" id="GO:0000398">
    <property type="term" value="P:mRNA splicing, via spliceosome"/>
    <property type="evidence" value="ECO:0000250"/>
    <property type="project" value="WormBase"/>
</dbReference>
<dbReference type="CDD" id="cd12259">
    <property type="entry name" value="RRM_SRSF11_SREK1"/>
    <property type="match status" value="1"/>
</dbReference>
<dbReference type="Gene3D" id="3.30.70.330">
    <property type="match status" value="2"/>
</dbReference>
<dbReference type="InterPro" id="IPR012677">
    <property type="entry name" value="Nucleotide-bd_a/b_plait_sf"/>
</dbReference>
<dbReference type="InterPro" id="IPR035979">
    <property type="entry name" value="RBD_domain_sf"/>
</dbReference>
<dbReference type="InterPro" id="IPR000504">
    <property type="entry name" value="RRM_dom"/>
</dbReference>
<dbReference type="PANTHER" id="PTHR32343:SF22">
    <property type="entry name" value="LD29830P"/>
    <property type="match status" value="1"/>
</dbReference>
<dbReference type="PANTHER" id="PTHR32343">
    <property type="entry name" value="SERINE/ARGININE-RICH SPLICING FACTOR"/>
    <property type="match status" value="1"/>
</dbReference>
<dbReference type="Pfam" id="PF00076">
    <property type="entry name" value="RRM_1"/>
    <property type="match status" value="1"/>
</dbReference>
<dbReference type="SMART" id="SM00360">
    <property type="entry name" value="RRM"/>
    <property type="match status" value="2"/>
</dbReference>
<dbReference type="SUPFAM" id="SSF54928">
    <property type="entry name" value="RNA-binding domain, RBD"/>
    <property type="match status" value="2"/>
</dbReference>
<dbReference type="PROSITE" id="PS50102">
    <property type="entry name" value="RRM"/>
    <property type="match status" value="2"/>
</dbReference>
<keyword id="KW-0025">Alternative splicing</keyword>
<keyword id="KW-0507">mRNA processing</keyword>
<keyword id="KW-0508">mRNA splicing</keyword>
<keyword id="KW-0539">Nucleus</keyword>
<keyword id="KW-0597">Phosphoprotein</keyword>
<keyword id="KW-1185">Reference proteome</keyword>
<keyword id="KW-0677">Repeat</keyword>
<keyword id="KW-0694">RNA-binding</keyword>
<reference evidence="8" key="1">
    <citation type="journal article" date="1998" name="Science">
        <title>Genome sequence of the nematode C. elegans: a platform for investigating biology.</title>
        <authorList>
            <consortium name="The C. elegans sequencing consortium"/>
        </authorList>
    </citation>
    <scope>NUCLEOTIDE SEQUENCE [LARGE SCALE GENOMIC DNA]</scope>
    <scope>ALTERNATIVE SPLICING</scope>
    <source>
        <strain evidence="8">Bristol N2</strain>
    </source>
</reference>
<reference evidence="7" key="2">
    <citation type="journal article" date="2000" name="EMBO J.">
        <title>Functional characterization of SR and SR-related genes in Caenorhabditis elegans.</title>
        <authorList>
            <person name="Longman D."/>
            <person name="Johnstone I.L."/>
            <person name="Caceres J.F."/>
        </authorList>
    </citation>
    <scope>IDENTIFICATION</scope>
</reference>
<sequence length="452" mass="52679">MSGEEKEKVKILHVANISTSATRDHIYNMFNYLGKIQDLKVYPSEGNITANTLLKTAFIKFDDERCVEVAQHLTNTVVIDCAIVCLPYPNPVIPDEESFFNSGGSTTAGQRQLPPHVTNKIQESDDGSALLITVDPTLEQLGLPAYPPLPADTDSAKVEEIRRTVYVGNLPKGVDGNEVLELFNMYFGEVMYARMASGPDALPCAYAYVEFSQQASVCNALQNDGFEFKERPLKIQHSRVAIIKPQAKTDEQALGEIEEAIRMGRNGDDRDRRRSRSPRRRRSPSPRRRRDSRDRDRDRDRDRRRSRDRRSRSRDRDRDRDRKRSRSRDRKRRSRSRDNKDRDRKRSRSRDRRRRSKSRDRKRERSRSRSKDRKRDKKRSRSRSPEKRRDKEDRKTEKKENENESSLREKLLEKKAARKDSSDDEWEEKPTPTNGEVKNEEIGNGDVVMASE</sequence>
<name>RSP7_CAEEL</name>
<protein>
    <recommendedName>
        <fullName>Probable splicing factor, arginine/serine-rich 7</fullName>
    </recommendedName>
    <alternativeName>
        <fullName>p54</fullName>
    </alternativeName>
</protein>